<organism>
    <name type="scientific">Welwitschia mirabilis</name>
    <name type="common">Tree tumbo</name>
    <name type="synonym">Welwitschia bainesii</name>
    <dbReference type="NCBI Taxonomy" id="3377"/>
    <lineage>
        <taxon>Eukaryota</taxon>
        <taxon>Viridiplantae</taxon>
        <taxon>Streptophyta</taxon>
        <taxon>Embryophyta</taxon>
        <taxon>Tracheophyta</taxon>
        <taxon>Spermatophyta</taxon>
        <taxon>Gnetopsida</taxon>
        <taxon>Gnetidae</taxon>
        <taxon>Welwitschiales</taxon>
        <taxon>Welwitschiaceae</taxon>
        <taxon>Welwitschia</taxon>
    </lineage>
</organism>
<comment type="function">
    <text evidence="1">This protein binds specifically to 23S rRNA.</text>
</comment>
<comment type="function">
    <text evidence="1">The globular domain of the protein is located near the polypeptide exit tunnel on the outside of the subunit, while an extended beta-hairpin is found that lines the wall of the exit tunnel in the center of the 70S ribosome.</text>
</comment>
<comment type="subunit">
    <text evidence="1">Part of the 50S ribosomal subunit.</text>
</comment>
<comment type="subcellular location">
    <subcellularLocation>
        <location>Plastid</location>
        <location>Chloroplast</location>
    </subcellularLocation>
</comment>
<comment type="similarity">
    <text evidence="2">Belongs to the universal ribosomal protein uL22 family.</text>
</comment>
<accession>B2Y1Z9</accession>
<accession>B7ZI09</accession>
<dbReference type="EMBL" id="EU342371">
    <property type="protein sequence ID" value="ABY26829.1"/>
    <property type="molecule type" value="Genomic_DNA"/>
</dbReference>
<dbReference type="EMBL" id="AP009568">
    <property type="protein sequence ID" value="BAH11189.1"/>
    <property type="molecule type" value="Genomic_DNA"/>
</dbReference>
<dbReference type="RefSeq" id="YP_001876616.1">
    <property type="nucleotide sequence ID" value="NC_010654.1"/>
</dbReference>
<dbReference type="SMR" id="B2Y1Z9"/>
<dbReference type="GeneID" id="6276219"/>
<dbReference type="GO" id="GO:0009507">
    <property type="term" value="C:chloroplast"/>
    <property type="evidence" value="ECO:0007669"/>
    <property type="project" value="UniProtKB-SubCell"/>
</dbReference>
<dbReference type="GO" id="GO:0015934">
    <property type="term" value="C:large ribosomal subunit"/>
    <property type="evidence" value="ECO:0007669"/>
    <property type="project" value="InterPro"/>
</dbReference>
<dbReference type="GO" id="GO:0019843">
    <property type="term" value="F:rRNA binding"/>
    <property type="evidence" value="ECO:0007669"/>
    <property type="project" value="UniProtKB-UniRule"/>
</dbReference>
<dbReference type="GO" id="GO:0003735">
    <property type="term" value="F:structural constituent of ribosome"/>
    <property type="evidence" value="ECO:0007669"/>
    <property type="project" value="InterPro"/>
</dbReference>
<dbReference type="GO" id="GO:0006412">
    <property type="term" value="P:translation"/>
    <property type="evidence" value="ECO:0007669"/>
    <property type="project" value="UniProtKB-UniRule"/>
</dbReference>
<dbReference type="CDD" id="cd00336">
    <property type="entry name" value="Ribosomal_L22"/>
    <property type="match status" value="1"/>
</dbReference>
<dbReference type="Gene3D" id="3.90.470.10">
    <property type="entry name" value="Ribosomal protein L22/L17"/>
    <property type="match status" value="1"/>
</dbReference>
<dbReference type="HAMAP" id="MF_01331_B">
    <property type="entry name" value="Ribosomal_uL22_B"/>
    <property type="match status" value="1"/>
</dbReference>
<dbReference type="InterPro" id="IPR001063">
    <property type="entry name" value="Ribosomal_uL22"/>
</dbReference>
<dbReference type="InterPro" id="IPR005727">
    <property type="entry name" value="Ribosomal_uL22_bac/chlpt-type"/>
</dbReference>
<dbReference type="InterPro" id="IPR047867">
    <property type="entry name" value="Ribosomal_uL22_bac/org-type"/>
</dbReference>
<dbReference type="InterPro" id="IPR018260">
    <property type="entry name" value="Ribosomal_uL22_CS"/>
</dbReference>
<dbReference type="InterPro" id="IPR036394">
    <property type="entry name" value="Ribosomal_uL22_sf"/>
</dbReference>
<dbReference type="NCBIfam" id="TIGR01044">
    <property type="entry name" value="rplV_bact"/>
    <property type="match status" value="1"/>
</dbReference>
<dbReference type="PANTHER" id="PTHR13501">
    <property type="entry name" value="CHLOROPLAST 50S RIBOSOMAL PROTEIN L22-RELATED"/>
    <property type="match status" value="1"/>
</dbReference>
<dbReference type="PANTHER" id="PTHR13501:SF10">
    <property type="entry name" value="LARGE RIBOSOMAL SUBUNIT PROTEIN UL22M"/>
    <property type="match status" value="1"/>
</dbReference>
<dbReference type="Pfam" id="PF00237">
    <property type="entry name" value="Ribosomal_L22"/>
    <property type="match status" value="1"/>
</dbReference>
<dbReference type="SUPFAM" id="SSF54843">
    <property type="entry name" value="Ribosomal protein L22"/>
    <property type="match status" value="1"/>
</dbReference>
<dbReference type="PROSITE" id="PS00464">
    <property type="entry name" value="RIBOSOMAL_L22"/>
    <property type="match status" value="1"/>
</dbReference>
<protein>
    <recommendedName>
        <fullName evidence="2">Large ribosomal subunit protein uL22c</fullName>
    </recommendedName>
    <alternativeName>
        <fullName>50S ribosomal protein L22, chloroplastic</fullName>
    </alternativeName>
</protein>
<feature type="chain" id="PRO_0000354594" description="Large ribosomal subunit protein uL22c">
    <location>
        <begin position="1"/>
        <end position="121"/>
    </location>
</feature>
<reference key="1">
    <citation type="journal article" date="2008" name="BMC Evol. Biol.">
        <title>The complete plastid genome sequence of Welwitschia mirabilis: an unusually compact plastome with accelerated divergence rates.</title>
        <authorList>
            <person name="McCoy S.R."/>
            <person name="Kuehl J.V."/>
            <person name="Boore J.L."/>
            <person name="Raubeson L.A."/>
        </authorList>
    </citation>
    <scope>NUCLEOTIDE SEQUENCE [LARGE SCALE GENOMIC DNA]</scope>
</reference>
<reference key="2">
    <citation type="journal article" date="2009" name="Mol. Phylogenet. Evol.">
        <title>Evolution of reduced and compact chloroplast genomes (cpDNAs) in gnetophytes: Selection toward a lower-cost strategy.</title>
        <authorList>
            <person name="Wu C.-S."/>
            <person name="Lai Y.-T."/>
            <person name="Lin C.-P."/>
            <person name="Wang Y.-N."/>
            <person name="Chaw S.-M."/>
        </authorList>
    </citation>
    <scope>NUCLEOTIDE SEQUENCE [LARGE SCALE GENOMIC DNA]</scope>
</reference>
<sequence length="121" mass="14068">MKTSTNKPNEEVRAFAKNIRMSAHKVRRVMDQIRGRPYAQAYILLKFLPYKACYPIFQLLNSAAANAKNNMSFKKELFVSRAEVNEATSSKRFHFRAKGRSFCIRKQTCHITIVLKQLPEQ</sequence>
<evidence type="ECO:0000250" key="1"/>
<evidence type="ECO:0000305" key="2"/>
<name>RK22_WELMI</name>
<proteinExistence type="inferred from homology"/>
<keyword id="KW-0150">Chloroplast</keyword>
<keyword id="KW-0934">Plastid</keyword>
<keyword id="KW-0687">Ribonucleoprotein</keyword>
<keyword id="KW-0689">Ribosomal protein</keyword>
<keyword id="KW-0694">RNA-binding</keyword>
<keyword id="KW-0699">rRNA-binding</keyword>
<gene>
    <name type="primary">rpl22</name>
</gene>
<geneLocation type="chloroplast"/>